<proteinExistence type="evidence at protein level"/>
<gene>
    <name evidence="9" type="primary">FUB6</name>
    <name type="ORF">FFUJ_02113</name>
</gene>
<evidence type="ECO:0000269" key="1">
    <source>
    </source>
</evidence>
<evidence type="ECO:0000269" key="2">
    <source>
    </source>
</evidence>
<evidence type="ECO:0000269" key="3">
    <source>
    </source>
</evidence>
<evidence type="ECO:0000269" key="4">
    <source>
    </source>
</evidence>
<evidence type="ECO:0000269" key="5">
    <source>
    </source>
</evidence>
<evidence type="ECO:0000269" key="6">
    <source>
    </source>
</evidence>
<evidence type="ECO:0000269" key="7">
    <source>
    </source>
</evidence>
<evidence type="ECO:0000269" key="8">
    <source>
    </source>
</evidence>
<evidence type="ECO:0000303" key="9">
    <source>
    </source>
</evidence>
<evidence type="ECO:0000305" key="10"/>
<evidence type="ECO:0000305" key="11">
    <source>
    </source>
</evidence>
<keyword id="KW-0560">Oxidoreductase</keyword>
<keyword id="KW-1185">Reference proteome</keyword>
<name>FUB6_GIBF5</name>
<reference key="1">
    <citation type="journal article" date="2013" name="PLoS Pathog.">
        <title>Deciphering the cryptic genome: genome-wide analyses of the rice pathogen Fusarium fujikuroi reveal complex regulation of secondary metabolism and novel metabolites.</title>
        <authorList>
            <person name="Wiemann P."/>
            <person name="Sieber C.M.K."/>
            <person name="von Bargen K.W."/>
            <person name="Studt L."/>
            <person name="Niehaus E.-M."/>
            <person name="Espino J.J."/>
            <person name="Huss K."/>
            <person name="Michielse C.B."/>
            <person name="Albermann S."/>
            <person name="Wagner D."/>
            <person name="Bergner S.V."/>
            <person name="Connolly L.R."/>
            <person name="Fischer A."/>
            <person name="Reuter G."/>
            <person name="Kleigrewe K."/>
            <person name="Bald T."/>
            <person name="Wingfield B.D."/>
            <person name="Ophir R."/>
            <person name="Freeman S."/>
            <person name="Hippler M."/>
            <person name="Smith K.M."/>
            <person name="Brown D.W."/>
            <person name="Proctor R.H."/>
            <person name="Muensterkoetter M."/>
            <person name="Freitag M."/>
            <person name="Humpf H.-U."/>
            <person name="Gueldener U."/>
            <person name="Tudzynski B."/>
        </authorList>
    </citation>
    <scope>NUCLEOTIDE SEQUENCE [LARGE SCALE GENOMIC DNA]</scope>
    <source>
        <strain>CBS 195.34 / IMI 58289 / NRRL A-6831</strain>
    </source>
</reference>
<reference key="2">
    <citation type="journal article" date="2006" name="Planta">
        <title>Fusaric acid induces apoptosis in saffron root-tip cells: roles of caspase-like activity, cytochrome c, and H2O2.</title>
        <authorList>
            <person name="Samadi L."/>
            <person name="Shahsavan Behboodi B."/>
        </authorList>
    </citation>
    <scope>BIOTECHNOLOGY</scope>
</reference>
<reference key="3">
    <citation type="journal article" date="2008" name="J. Appl. Microbiol.">
        <title>Bikaverin and fusaric acid from Fusarium oxysporum show antioomycete activity against Phytophthora infestans.</title>
        <authorList>
            <person name="Son S.W."/>
            <person name="Kim H.Y."/>
            <person name="Choi G.J."/>
            <person name="Lim H.K."/>
            <person name="Jang K.S."/>
            <person name="Lee S.O."/>
            <person name="Lee S."/>
            <person name="Sung N.D."/>
            <person name="Kim J.C."/>
        </authorList>
    </citation>
    <scope>BIOTECHNOLOGY</scope>
</reference>
<reference key="4">
    <citation type="journal article" date="2011" name="Arch. Pharm. Res.">
        <title>Antimycobacterial activity of fusaric acid from a mangrove endophyte and its metal complexes.</title>
        <authorList>
            <person name="Pan J.H."/>
            <person name="Chen Y."/>
            <person name="Huang Y.H."/>
            <person name="Tao Y.W."/>
            <person name="Wang J."/>
            <person name="Li Y."/>
            <person name="Peng Y."/>
            <person name="Dong T."/>
            <person name="Lai X.M."/>
            <person name="Lin Y.C."/>
        </authorList>
    </citation>
    <scope>BIOTECHNOLOGY</scope>
</reference>
<reference key="5">
    <citation type="journal article" date="2011" name="Toxicon">
        <title>Phytotoxicity of fusaric acid and analogs to cotton.</title>
        <authorList>
            <person name="Stipanovic R.D."/>
            <person name="Puckhaber L.S."/>
            <person name="Liu J."/>
            <person name="Bell A.A."/>
        </authorList>
    </citation>
    <scope>BIOTECHNOLOGY</scope>
</reference>
<reference key="6">
    <citation type="journal article" date="2012" name="Planta Med.">
        <title>In vitro acanthamoebicidal activity of fusaric acid and dehydrofusaric acid from an endophytic fungus Fusarium sp. Tlau3.</title>
        <authorList>
            <person name="Boonman N."/>
            <person name="Prachya S."/>
            <person name="Boonmee A."/>
            <person name="Kittakoop P."/>
            <person name="Wiyakrutta S."/>
            <person name="Sriubolmas N."/>
            <person name="Warit S."/>
            <person name="Dharmkrong-At Chusattayanond A."/>
        </authorList>
    </citation>
    <scope>BIOTECHNOLOGY</scope>
</reference>
<reference key="7">
    <citation type="journal article" date="2013" name="Planta">
        <title>Fusaric acid induction of programmed cell death modulated through nitric oxide signalling in tobacco suspension cells.</title>
        <authorList>
            <person name="Jiao J."/>
            <person name="Zhou B."/>
            <person name="Zhu X."/>
            <person name="Gao Z."/>
            <person name="Liang Y."/>
        </authorList>
    </citation>
    <scope>BIOTECHNOLOGY</scope>
</reference>
<reference key="8">
    <citation type="journal article" date="2013" name="PLoS ONE">
        <title>Contamination of bananas with beauvericin and fusaric acid produced by Fusarium oxysporum f. sp. cubense.</title>
        <authorList>
            <person name="Li C."/>
            <person name="Zuo C."/>
            <person name="Deng G."/>
            <person name="Kuang R."/>
            <person name="Yang Q."/>
            <person name="Hu C."/>
            <person name="Sheng O."/>
            <person name="Zhang S."/>
            <person name="Ma L."/>
            <person name="Wei Y."/>
            <person name="Yang J."/>
            <person name="Liu S."/>
            <person name="Biswas M.K."/>
            <person name="Viljoen A."/>
            <person name="Yi G."/>
        </authorList>
    </citation>
    <scope>BIOTECHNOLOGY</scope>
</reference>
<reference key="9">
    <citation type="journal article" date="2016" name="Environ. Microbiol.">
        <title>Two separate key enzymes and two pathway-specific transcription factors are involved in fusaric acid biosynthesis in Fusarium fujikuroi.</title>
        <authorList>
            <person name="Studt L."/>
            <person name="Janevska S."/>
            <person name="Niehaus E.M."/>
            <person name="Burkhardt I."/>
            <person name="Arndt B."/>
            <person name="Sieber C.M."/>
            <person name="Humpf H.U."/>
            <person name="Dickschat J.S."/>
            <person name="Tudzynski B."/>
        </authorList>
    </citation>
    <scope>FUNCTION</scope>
    <scope>DISRUPTION PHENOTYPE</scope>
    <scope>CATALYTIC ACTIVITY</scope>
</reference>
<organism>
    <name type="scientific">Gibberella fujikuroi (strain CBS 195.34 / IMI 58289 / NRRL A-6831)</name>
    <name type="common">Bakanae and foot rot disease fungus</name>
    <name type="synonym">Fusarium fujikuroi</name>
    <dbReference type="NCBI Taxonomy" id="1279085"/>
    <lineage>
        <taxon>Eukaryota</taxon>
        <taxon>Fungi</taxon>
        <taxon>Dikarya</taxon>
        <taxon>Ascomycota</taxon>
        <taxon>Pezizomycotina</taxon>
        <taxon>Sordariomycetes</taxon>
        <taxon>Hypocreomycetidae</taxon>
        <taxon>Hypocreales</taxon>
        <taxon>Nectriaceae</taxon>
        <taxon>Fusarium</taxon>
        <taxon>Fusarium fujikuroi species complex</taxon>
    </lineage>
</organism>
<dbReference type="EC" id="1.-.-.-" evidence="11"/>
<dbReference type="EMBL" id="HF679025">
    <property type="protein sequence ID" value="CCT65191.1"/>
    <property type="molecule type" value="Genomic_DNA"/>
</dbReference>
<dbReference type="SMR" id="S0DRW9"/>
<dbReference type="STRING" id="1279085.S0DRW9"/>
<dbReference type="EnsemblFungi" id="CCT65191">
    <property type="protein sequence ID" value="CCT65191"/>
    <property type="gene ID" value="FFUJ_02113"/>
</dbReference>
<dbReference type="VEuPathDB" id="FungiDB:FFUJ_02113"/>
<dbReference type="HOGENOM" id="CLU_026673_29_1_1"/>
<dbReference type="Proteomes" id="UP000016800">
    <property type="component" value="Chromosome 3"/>
</dbReference>
<dbReference type="GO" id="GO:0016628">
    <property type="term" value="F:oxidoreductase activity, acting on the CH-CH group of donors, NAD or NADP as acceptor"/>
    <property type="evidence" value="ECO:0007669"/>
    <property type="project" value="InterPro"/>
</dbReference>
<dbReference type="CDD" id="cd05288">
    <property type="entry name" value="PGDH"/>
    <property type="match status" value="1"/>
</dbReference>
<dbReference type="Gene3D" id="3.90.180.10">
    <property type="entry name" value="Medium-chain alcohol dehydrogenases, catalytic domain"/>
    <property type="match status" value="1"/>
</dbReference>
<dbReference type="Gene3D" id="3.40.50.720">
    <property type="entry name" value="NAD(P)-binding Rossmann-like Domain"/>
    <property type="match status" value="1"/>
</dbReference>
<dbReference type="InterPro" id="IPR041694">
    <property type="entry name" value="ADH_N_2"/>
</dbReference>
<dbReference type="InterPro" id="IPR011032">
    <property type="entry name" value="GroES-like_sf"/>
</dbReference>
<dbReference type="InterPro" id="IPR045010">
    <property type="entry name" value="MDR_fam"/>
</dbReference>
<dbReference type="InterPro" id="IPR036291">
    <property type="entry name" value="NAD(P)-bd_dom_sf"/>
</dbReference>
<dbReference type="InterPro" id="IPR020843">
    <property type="entry name" value="PKS_ER"/>
</dbReference>
<dbReference type="PANTHER" id="PTHR43205">
    <property type="entry name" value="PROSTAGLANDIN REDUCTASE"/>
    <property type="match status" value="1"/>
</dbReference>
<dbReference type="PANTHER" id="PTHR43205:SF7">
    <property type="entry name" value="PROSTAGLANDIN REDUCTASE 1"/>
    <property type="match status" value="1"/>
</dbReference>
<dbReference type="Pfam" id="PF16884">
    <property type="entry name" value="ADH_N_2"/>
    <property type="match status" value="1"/>
</dbReference>
<dbReference type="SMART" id="SM00829">
    <property type="entry name" value="PKS_ER"/>
    <property type="match status" value="1"/>
</dbReference>
<dbReference type="SUPFAM" id="SSF50129">
    <property type="entry name" value="GroES-like"/>
    <property type="match status" value="1"/>
</dbReference>
<dbReference type="SUPFAM" id="SSF51735">
    <property type="entry name" value="NAD(P)-binding Rossmann-fold domains"/>
    <property type="match status" value="1"/>
</dbReference>
<protein>
    <recommendedName>
        <fullName evidence="9">Dehydrogenase FUB6</fullName>
        <ecNumber evidence="11">1.-.-.-</ecNumber>
    </recommendedName>
    <alternativeName>
        <fullName evidence="9">Fusaric acid biosynthesis protein 6</fullName>
    </alternativeName>
</protein>
<feature type="chain" id="PRO_0000437333" description="Dehydrogenase FUB6">
    <location>
        <begin position="1"/>
        <end position="337"/>
    </location>
</feature>
<comment type="function">
    <text evidence="8">Dehydrogenase; part of the gene cluster that mediates the biosynthesis of fusaric acid, a mycotoxin with low to moderate toxicity to animals and humans, but with high phytotoxic properties (PubMed:26662839). L-aspartate is suggested as fusaric acid amino acid precursor that is activated and further processed to O-acetyl-L-homoserine by cluster enzymes aspartate kinase FUB3 and homoserine O-acetyltransferase FUB5, as well as enzymes of the primary metabolism (PubMed:26662839). The polyketide synthase (PKS) FUB1 generates the triketide trans-2-hexenal which is presumptively released by the hydrolase FUB4 and linked to the NRPS-bound amino acid precursor by NAD(P)-dependent dehydrogenase FUB6 (PubMed:26662839). FUB1, FUB4, and the non-canonical NRPS Fub8 may form an enzyme complex (PubMed:26662839). Further processing of the NRPS-bound intermediate might be carried out by FUB6 and the O-acetylhomoserine FUB7, enabling a spontaneous electrocyclization to close the carbon backbone of fusaric acid (PubMed:26662839). Dihydrofusaric acid is likely to be released via reduction by the thioester reductase (TR) domain of FUB8 whereupon the final oxidation to fusaric acid may (also) be performed by the FMN-dependent dehydrogenase FUB9 (PubMed:26662839).</text>
</comment>
<comment type="pathway">
    <text evidence="8">Mycotoxin biosynthesis.</text>
</comment>
<comment type="disruption phenotype">
    <text evidence="8">Impairs the production of fusaric acid, but leads to the accumulation of trans-2-hexenal (PubMed:26662839).</text>
</comment>
<comment type="biotechnology">
    <text evidence="1 2 3 4 5 6 7">Fusaric acid is phytotoxic to plants such as cotton and banana (PubMed:20955724, PubMed:23922960). It has been shown to induce programmed cell death in plants (PubMed:16868776, PubMed:23838885). In addition to a mild toxicity to animals, fusaric acid exhibits acanthamoebicidal, antioomycete, and antimycobacterial activities (PubMed:17927749, PubMed:21811925, PubMed:22864988).</text>
</comment>
<comment type="similarity">
    <text evidence="10">Belongs to the zinc-containing alcohol dehydrogenase family. Quinone oxidoreductase subfamily.</text>
</comment>
<sequence>MGGEVSNKTWVFKKSPSSLPEPGVHTAFEDRPLSLVAPPGGLVIKLLTAGLDPHQRDRMRGAGNVDYVPGYEVNEPITNFSIAKVIRSDNDVFEEGSLIAGSLPIAEYGIIPRELIDARAMASPLVWKVSNDYNLDVKHYVGTLGLAGMTAWNSFYGLVKAVKGETIWVNAASSSVGEVVVQLAKIEGMKVIASVSSDDKLDYVVNELGADVGFNYRKEPVGKALKPAIENMKWFGRIISCGTASQYNKPVEEQYGVTNLSEIFRRRIKIQGFIFWDDNIYTDNIENFKATMPKWVSEGKIKSRYTQFEGIEQADKAFLSMFTGGSHGKTVLKISDP</sequence>
<accession>S0DRW9</accession>